<accession>Q6LWJ8</accession>
<name>PCNA_METMP</name>
<protein>
    <recommendedName>
        <fullName evidence="1">DNA polymerase sliding clamp</fullName>
    </recommendedName>
    <alternativeName>
        <fullName evidence="1">Proliferating cell nuclear antigen homolog</fullName>
        <shortName evidence="1">PCNA</shortName>
    </alternativeName>
</protein>
<sequence>MFRATCNTRDFKKVINATSNLVDEICFEVDENGIKASAMDPSHVALVSMEMPKDVFEEYEGDIQDIGIDLEALKKIIARGRGDEKLILDLDVEKNKLNITFKSNVTRKFSIALYDVSSSNLKVPDIEYPNSVSIKAGAFVEALKDAELVNDHITLKIDENKFVIYSKGDLNQSETVFDNSIDDDDNALADFNMGEASRSTFNLAYLKDLTKSTAAEDLLKIYLGSDMPVKIEYEVSGSKLVFLLAPRIES</sequence>
<organism>
    <name type="scientific">Methanococcus maripaludis (strain DSM 14266 / JCM 13030 / NBRC 101832 / S2 / LL)</name>
    <dbReference type="NCBI Taxonomy" id="267377"/>
    <lineage>
        <taxon>Archaea</taxon>
        <taxon>Methanobacteriati</taxon>
        <taxon>Methanobacteriota</taxon>
        <taxon>Methanomada group</taxon>
        <taxon>Methanococci</taxon>
        <taxon>Methanococcales</taxon>
        <taxon>Methanococcaceae</taxon>
        <taxon>Methanococcus</taxon>
    </lineage>
</organism>
<evidence type="ECO:0000255" key="1">
    <source>
        <dbReference type="HAMAP-Rule" id="MF_00317"/>
    </source>
</evidence>
<feature type="chain" id="PRO_0000149199" description="DNA polymerase sliding clamp">
    <location>
        <begin position="1"/>
        <end position="250"/>
    </location>
</feature>
<comment type="function">
    <text evidence="1">Sliding clamp subunit that acts as a moving platform for DNA processing. Responsible for tethering the catalytic subunit of DNA polymerase and other proteins to DNA during high-speed replication.</text>
</comment>
<comment type="subunit">
    <text evidence="1">Homotrimer. The subunits circularize to form a toroid; DNA passes through its center. Replication factor C (RFC) is required to load the toroid on the DNA.</text>
</comment>
<comment type="similarity">
    <text evidence="1">Belongs to the PCNA family.</text>
</comment>
<dbReference type="EMBL" id="BX950229">
    <property type="protein sequence ID" value="CAF31267.1"/>
    <property type="molecule type" value="Genomic_DNA"/>
</dbReference>
<dbReference type="RefSeq" id="WP_011171655.1">
    <property type="nucleotide sequence ID" value="NC_005791.1"/>
</dbReference>
<dbReference type="SMR" id="Q6LWJ8"/>
<dbReference type="STRING" id="267377.MMP1711"/>
<dbReference type="EnsemblBacteria" id="CAF31267">
    <property type="protein sequence ID" value="CAF31267"/>
    <property type="gene ID" value="MMP1711"/>
</dbReference>
<dbReference type="GeneID" id="10983295"/>
<dbReference type="KEGG" id="mmp:MMP1711"/>
<dbReference type="PATRIC" id="fig|267377.15.peg.1754"/>
<dbReference type="eggNOG" id="arCOG00488">
    <property type="taxonomic scope" value="Archaea"/>
</dbReference>
<dbReference type="HOGENOM" id="CLU_043978_1_0_2"/>
<dbReference type="OrthoDB" id="14749at2157"/>
<dbReference type="Proteomes" id="UP000000590">
    <property type="component" value="Chromosome"/>
</dbReference>
<dbReference type="GO" id="GO:0003677">
    <property type="term" value="F:DNA binding"/>
    <property type="evidence" value="ECO:0007669"/>
    <property type="project" value="UniProtKB-UniRule"/>
</dbReference>
<dbReference type="GO" id="GO:0030337">
    <property type="term" value="F:DNA polymerase processivity factor activity"/>
    <property type="evidence" value="ECO:0007669"/>
    <property type="project" value="UniProtKB-UniRule"/>
</dbReference>
<dbReference type="GO" id="GO:0006272">
    <property type="term" value="P:leading strand elongation"/>
    <property type="evidence" value="ECO:0007669"/>
    <property type="project" value="TreeGrafter"/>
</dbReference>
<dbReference type="GO" id="GO:0006275">
    <property type="term" value="P:regulation of DNA replication"/>
    <property type="evidence" value="ECO:0007669"/>
    <property type="project" value="UniProtKB-UniRule"/>
</dbReference>
<dbReference type="CDD" id="cd00577">
    <property type="entry name" value="PCNA"/>
    <property type="match status" value="1"/>
</dbReference>
<dbReference type="Gene3D" id="3.70.10.10">
    <property type="match status" value="1"/>
</dbReference>
<dbReference type="HAMAP" id="MF_00317">
    <property type="entry name" value="DNApol_clamp_arch"/>
    <property type="match status" value="1"/>
</dbReference>
<dbReference type="InterPro" id="IPR046938">
    <property type="entry name" value="DNA_clamp_sf"/>
</dbReference>
<dbReference type="InterPro" id="IPR000730">
    <property type="entry name" value="Pr_cel_nuc_antig"/>
</dbReference>
<dbReference type="InterPro" id="IPR022649">
    <property type="entry name" value="Pr_cel_nuc_antig_C"/>
</dbReference>
<dbReference type="InterPro" id="IPR022659">
    <property type="entry name" value="Pr_cel_nuc_antig_CS"/>
</dbReference>
<dbReference type="InterPro" id="IPR022648">
    <property type="entry name" value="Pr_cel_nuc_antig_N"/>
</dbReference>
<dbReference type="NCBIfam" id="TIGR00590">
    <property type="entry name" value="pcna"/>
    <property type="match status" value="1"/>
</dbReference>
<dbReference type="NCBIfam" id="NF002219">
    <property type="entry name" value="PRK01115.1-2"/>
    <property type="match status" value="1"/>
</dbReference>
<dbReference type="PANTHER" id="PTHR11352">
    <property type="entry name" value="PROLIFERATING CELL NUCLEAR ANTIGEN"/>
    <property type="match status" value="1"/>
</dbReference>
<dbReference type="PANTHER" id="PTHR11352:SF0">
    <property type="entry name" value="PROLIFERATING CELL NUCLEAR ANTIGEN"/>
    <property type="match status" value="1"/>
</dbReference>
<dbReference type="Pfam" id="PF02747">
    <property type="entry name" value="PCNA_C"/>
    <property type="match status" value="1"/>
</dbReference>
<dbReference type="Pfam" id="PF00705">
    <property type="entry name" value="PCNA_N"/>
    <property type="match status" value="1"/>
</dbReference>
<dbReference type="PRINTS" id="PR00339">
    <property type="entry name" value="PCNACYCLIN"/>
</dbReference>
<dbReference type="SUPFAM" id="SSF55979">
    <property type="entry name" value="DNA clamp"/>
    <property type="match status" value="2"/>
</dbReference>
<dbReference type="PROSITE" id="PS01251">
    <property type="entry name" value="PCNA_1"/>
    <property type="match status" value="1"/>
</dbReference>
<gene>
    <name evidence="1" type="primary">pcn</name>
    <name type="ordered locus">MMP1711</name>
</gene>
<keyword id="KW-0235">DNA replication</keyword>
<keyword id="KW-0238">DNA-binding</keyword>
<keyword id="KW-1185">Reference proteome</keyword>
<reference key="1">
    <citation type="journal article" date="2004" name="J. Bacteriol.">
        <title>Complete genome sequence of the genetically tractable hydrogenotrophic methanogen Methanococcus maripaludis.</title>
        <authorList>
            <person name="Hendrickson E.L."/>
            <person name="Kaul R."/>
            <person name="Zhou Y."/>
            <person name="Bovee D."/>
            <person name="Chapman P."/>
            <person name="Chung J."/>
            <person name="Conway de Macario E."/>
            <person name="Dodsworth J.A."/>
            <person name="Gillett W."/>
            <person name="Graham D.E."/>
            <person name="Hackett M."/>
            <person name="Haydock A.K."/>
            <person name="Kang A."/>
            <person name="Land M.L."/>
            <person name="Levy R."/>
            <person name="Lie T.J."/>
            <person name="Major T.A."/>
            <person name="Moore B.C."/>
            <person name="Porat I."/>
            <person name="Palmeiri A."/>
            <person name="Rouse G."/>
            <person name="Saenphimmachak C."/>
            <person name="Soell D."/>
            <person name="Van Dien S."/>
            <person name="Wang T."/>
            <person name="Whitman W.B."/>
            <person name="Xia Q."/>
            <person name="Zhang Y."/>
            <person name="Larimer F.W."/>
            <person name="Olson M.V."/>
            <person name="Leigh J.A."/>
        </authorList>
    </citation>
    <scope>NUCLEOTIDE SEQUENCE [LARGE SCALE GENOMIC DNA]</scope>
    <source>
        <strain>DSM 14266 / JCM 13030 / NBRC 101832 / S2 / LL</strain>
    </source>
</reference>
<proteinExistence type="inferred from homology"/>